<accession>Q6FEC7</accession>
<sequence length="361" mass="40590">MNVTNEKMRFWSPEVRELEPYVPGEQPKIQNLLKLNTNENPYPPSPKVKAAVETVLVDQADALRLYPDPDASLLKQAIAKQQHLSVEQVFVGNGSDEVLAHIFKAFFIQDEPILYPDISYSFYPVYSQFFGVQTKQIPLNDHFEIVVEDYQQNNGGIIIANPNAPTSIALSLKNIEQILKNNPDRVVVIDEAYVDFGAESAASLVNQYDNLVVCQTTSKSRSLAGLRVGYALAQAHLIAALEAVKNSFNSYPIDRFAIAAAVASFEDQAYFEEQCLKVIQSREQLIEQLETIGFDVLPSKANFIFVTHPAHVAIELAKALREQGIIVRHFNKPRINQYLRITVGTDEQNQRLVNTLKLFIN</sequence>
<name>HIS8_ACIAD</name>
<gene>
    <name evidence="1" type="primary">hisC</name>
    <name type="ordered locus">ACIAD0664</name>
</gene>
<feature type="chain" id="PRO_0000153291" description="Histidinol-phosphate aminotransferase">
    <location>
        <begin position="1"/>
        <end position="361"/>
    </location>
</feature>
<feature type="modified residue" description="N6-(pyridoxal phosphate)lysine" evidence="1">
    <location>
        <position position="219"/>
    </location>
</feature>
<organism>
    <name type="scientific">Acinetobacter baylyi (strain ATCC 33305 / BD413 / ADP1)</name>
    <dbReference type="NCBI Taxonomy" id="62977"/>
    <lineage>
        <taxon>Bacteria</taxon>
        <taxon>Pseudomonadati</taxon>
        <taxon>Pseudomonadota</taxon>
        <taxon>Gammaproteobacteria</taxon>
        <taxon>Moraxellales</taxon>
        <taxon>Moraxellaceae</taxon>
        <taxon>Acinetobacter</taxon>
    </lineage>
</organism>
<comment type="catalytic activity">
    <reaction evidence="1">
        <text>L-histidinol phosphate + 2-oxoglutarate = 3-(imidazol-4-yl)-2-oxopropyl phosphate + L-glutamate</text>
        <dbReference type="Rhea" id="RHEA:23744"/>
        <dbReference type="ChEBI" id="CHEBI:16810"/>
        <dbReference type="ChEBI" id="CHEBI:29985"/>
        <dbReference type="ChEBI" id="CHEBI:57766"/>
        <dbReference type="ChEBI" id="CHEBI:57980"/>
        <dbReference type="EC" id="2.6.1.9"/>
    </reaction>
</comment>
<comment type="cofactor">
    <cofactor evidence="1">
        <name>pyridoxal 5'-phosphate</name>
        <dbReference type="ChEBI" id="CHEBI:597326"/>
    </cofactor>
</comment>
<comment type="pathway">
    <text evidence="1">Amino-acid biosynthesis; L-histidine biosynthesis; L-histidine from 5-phospho-alpha-D-ribose 1-diphosphate: step 7/9.</text>
</comment>
<comment type="subunit">
    <text evidence="1">Homodimer.</text>
</comment>
<comment type="similarity">
    <text evidence="1">Belongs to the class-II pyridoxal-phosphate-dependent aminotransferase family. Histidinol-phosphate aminotransferase subfamily.</text>
</comment>
<keyword id="KW-0028">Amino-acid biosynthesis</keyword>
<keyword id="KW-0032">Aminotransferase</keyword>
<keyword id="KW-0368">Histidine biosynthesis</keyword>
<keyword id="KW-0663">Pyridoxal phosphate</keyword>
<keyword id="KW-0808">Transferase</keyword>
<evidence type="ECO:0000255" key="1">
    <source>
        <dbReference type="HAMAP-Rule" id="MF_01023"/>
    </source>
</evidence>
<proteinExistence type="inferred from homology"/>
<protein>
    <recommendedName>
        <fullName evidence="1">Histidinol-phosphate aminotransferase</fullName>
        <ecNumber evidence="1">2.6.1.9</ecNumber>
    </recommendedName>
    <alternativeName>
        <fullName evidence="1">Imidazole acetol-phosphate transaminase</fullName>
    </alternativeName>
</protein>
<dbReference type="EC" id="2.6.1.9" evidence="1"/>
<dbReference type="EMBL" id="CR543861">
    <property type="protein sequence ID" value="CAG67581.1"/>
    <property type="molecule type" value="Genomic_DNA"/>
</dbReference>
<dbReference type="RefSeq" id="WP_004922691.1">
    <property type="nucleotide sequence ID" value="NC_005966.1"/>
</dbReference>
<dbReference type="SMR" id="Q6FEC7"/>
<dbReference type="STRING" id="202950.GCA_001485005_02432"/>
<dbReference type="GeneID" id="45233142"/>
<dbReference type="KEGG" id="aci:ACIAD0664"/>
<dbReference type="eggNOG" id="COG0079">
    <property type="taxonomic scope" value="Bacteria"/>
</dbReference>
<dbReference type="HOGENOM" id="CLU_017584_3_0_6"/>
<dbReference type="OrthoDB" id="9809616at2"/>
<dbReference type="BioCyc" id="ASP62977:ACIAD_RS03070-MONOMER"/>
<dbReference type="UniPathway" id="UPA00031">
    <property type="reaction ID" value="UER00012"/>
</dbReference>
<dbReference type="Proteomes" id="UP000000430">
    <property type="component" value="Chromosome"/>
</dbReference>
<dbReference type="GO" id="GO:0004400">
    <property type="term" value="F:histidinol-phosphate transaminase activity"/>
    <property type="evidence" value="ECO:0007669"/>
    <property type="project" value="UniProtKB-UniRule"/>
</dbReference>
<dbReference type="GO" id="GO:0030170">
    <property type="term" value="F:pyridoxal phosphate binding"/>
    <property type="evidence" value="ECO:0007669"/>
    <property type="project" value="InterPro"/>
</dbReference>
<dbReference type="GO" id="GO:0000105">
    <property type="term" value="P:L-histidine biosynthetic process"/>
    <property type="evidence" value="ECO:0007669"/>
    <property type="project" value="UniProtKB-UniRule"/>
</dbReference>
<dbReference type="CDD" id="cd00609">
    <property type="entry name" value="AAT_like"/>
    <property type="match status" value="1"/>
</dbReference>
<dbReference type="Gene3D" id="3.90.1150.10">
    <property type="entry name" value="Aspartate Aminotransferase, domain 1"/>
    <property type="match status" value="1"/>
</dbReference>
<dbReference type="Gene3D" id="3.40.640.10">
    <property type="entry name" value="Type I PLP-dependent aspartate aminotransferase-like (Major domain)"/>
    <property type="match status" value="1"/>
</dbReference>
<dbReference type="HAMAP" id="MF_01023">
    <property type="entry name" value="HisC_aminotrans_2"/>
    <property type="match status" value="1"/>
</dbReference>
<dbReference type="InterPro" id="IPR004839">
    <property type="entry name" value="Aminotransferase_I/II_large"/>
</dbReference>
<dbReference type="InterPro" id="IPR005861">
    <property type="entry name" value="HisP_aminotrans"/>
</dbReference>
<dbReference type="InterPro" id="IPR050106">
    <property type="entry name" value="HistidinolP_aminotransfase"/>
</dbReference>
<dbReference type="InterPro" id="IPR015424">
    <property type="entry name" value="PyrdxlP-dep_Trfase"/>
</dbReference>
<dbReference type="InterPro" id="IPR015421">
    <property type="entry name" value="PyrdxlP-dep_Trfase_major"/>
</dbReference>
<dbReference type="InterPro" id="IPR015422">
    <property type="entry name" value="PyrdxlP-dep_Trfase_small"/>
</dbReference>
<dbReference type="NCBIfam" id="TIGR01141">
    <property type="entry name" value="hisC"/>
    <property type="match status" value="1"/>
</dbReference>
<dbReference type="PANTHER" id="PTHR43643:SF3">
    <property type="entry name" value="HISTIDINOL-PHOSPHATE AMINOTRANSFERASE"/>
    <property type="match status" value="1"/>
</dbReference>
<dbReference type="PANTHER" id="PTHR43643">
    <property type="entry name" value="HISTIDINOL-PHOSPHATE AMINOTRANSFERASE 2"/>
    <property type="match status" value="1"/>
</dbReference>
<dbReference type="Pfam" id="PF00155">
    <property type="entry name" value="Aminotran_1_2"/>
    <property type="match status" value="1"/>
</dbReference>
<dbReference type="SUPFAM" id="SSF53383">
    <property type="entry name" value="PLP-dependent transferases"/>
    <property type="match status" value="1"/>
</dbReference>
<reference key="1">
    <citation type="journal article" date="2004" name="Nucleic Acids Res.">
        <title>Unique features revealed by the genome sequence of Acinetobacter sp. ADP1, a versatile and naturally transformation competent bacterium.</title>
        <authorList>
            <person name="Barbe V."/>
            <person name="Vallenet D."/>
            <person name="Fonknechten N."/>
            <person name="Kreimeyer A."/>
            <person name="Oztas S."/>
            <person name="Labarre L."/>
            <person name="Cruveiller S."/>
            <person name="Robert C."/>
            <person name="Duprat S."/>
            <person name="Wincker P."/>
            <person name="Ornston L.N."/>
            <person name="Weissenbach J."/>
            <person name="Marliere P."/>
            <person name="Cohen G.N."/>
            <person name="Medigue C."/>
        </authorList>
    </citation>
    <scope>NUCLEOTIDE SEQUENCE [LARGE SCALE GENOMIC DNA]</scope>
    <source>
        <strain>ATCC 33305 / BD413 / ADP1</strain>
    </source>
</reference>